<feature type="chain" id="PRO_0000168456" description="L-lactate dehydrogenase A chain">
    <location>
        <begin position="1"/>
        <end position="333"/>
    </location>
</feature>
<feature type="active site" description="Proton acceptor" evidence="1">
    <location>
        <position position="194"/>
    </location>
</feature>
<feature type="binding site" evidence="1">
    <location>
        <begin position="30"/>
        <end position="58"/>
    </location>
    <ligand>
        <name>NAD(+)</name>
        <dbReference type="ChEBI" id="CHEBI:57540"/>
    </ligand>
</feature>
<feature type="binding site" evidence="1">
    <location>
        <position position="100"/>
    </location>
    <ligand>
        <name>NAD(+)</name>
        <dbReference type="ChEBI" id="CHEBI:57540"/>
    </ligand>
</feature>
<feature type="binding site" evidence="1">
    <location>
        <position position="107"/>
    </location>
    <ligand>
        <name>substrate</name>
    </ligand>
</feature>
<feature type="binding site" evidence="1">
    <location>
        <position position="139"/>
    </location>
    <ligand>
        <name>NAD(+)</name>
        <dbReference type="ChEBI" id="CHEBI:57540"/>
    </ligand>
</feature>
<feature type="binding site" evidence="1">
    <location>
        <position position="139"/>
    </location>
    <ligand>
        <name>substrate</name>
    </ligand>
</feature>
<feature type="binding site" evidence="1">
    <location>
        <position position="170"/>
    </location>
    <ligand>
        <name>substrate</name>
    </ligand>
</feature>
<feature type="binding site" evidence="1">
    <location>
        <position position="249"/>
    </location>
    <ligand>
        <name>substrate</name>
    </ligand>
</feature>
<name>LDHA_AMBME</name>
<reference key="1">
    <citation type="submission" date="1998-06" db="EMBL/GenBank/DDBJ databases">
        <title>Molecular evolution of vertebrate lactate dehydrogenase isozymes by gene duplication.</title>
        <authorList>
            <person name="Tsoi S.C.-M."/>
            <person name="Li J.Y."/>
            <person name="Mannen H."/>
            <person name="Li S.S.-L."/>
        </authorList>
    </citation>
    <scope>NUCLEOTIDE SEQUENCE [MRNA]</scope>
</reference>
<gene>
    <name type="primary">LDHA</name>
</gene>
<dbReference type="EC" id="1.1.1.27" evidence="2"/>
<dbReference type="EMBL" id="AF070998">
    <property type="protein sequence ID" value="AAD40735.1"/>
    <property type="molecule type" value="mRNA"/>
</dbReference>
<dbReference type="RefSeq" id="XP_069479885.1">
    <property type="nucleotide sequence ID" value="XM_069623784.1"/>
</dbReference>
<dbReference type="SMR" id="Q9W7M6"/>
<dbReference type="GeneID" id="138503786"/>
<dbReference type="UniPathway" id="UPA00554">
    <property type="reaction ID" value="UER00611"/>
</dbReference>
<dbReference type="GO" id="GO:0005737">
    <property type="term" value="C:cytoplasm"/>
    <property type="evidence" value="ECO:0007669"/>
    <property type="project" value="UniProtKB-SubCell"/>
</dbReference>
<dbReference type="GO" id="GO:0004459">
    <property type="term" value="F:L-lactate dehydrogenase activity"/>
    <property type="evidence" value="ECO:0007669"/>
    <property type="project" value="UniProtKB-EC"/>
</dbReference>
<dbReference type="GO" id="GO:0006089">
    <property type="term" value="P:lactate metabolic process"/>
    <property type="evidence" value="ECO:0007669"/>
    <property type="project" value="TreeGrafter"/>
</dbReference>
<dbReference type="CDD" id="cd05293">
    <property type="entry name" value="LDH_1"/>
    <property type="match status" value="1"/>
</dbReference>
<dbReference type="FunFam" id="3.40.50.720:FF:000029">
    <property type="entry name" value="L-lactate dehydrogenase A chain"/>
    <property type="match status" value="1"/>
</dbReference>
<dbReference type="FunFam" id="3.90.110.10:FF:000003">
    <property type="entry name" value="L-lactate dehydrogenase A chain"/>
    <property type="match status" value="1"/>
</dbReference>
<dbReference type="Gene3D" id="3.90.110.10">
    <property type="entry name" value="Lactate dehydrogenase/glycoside hydrolase, family 4, C-terminal"/>
    <property type="match status" value="1"/>
</dbReference>
<dbReference type="Gene3D" id="3.40.50.720">
    <property type="entry name" value="NAD(P)-binding Rossmann-like Domain"/>
    <property type="match status" value="1"/>
</dbReference>
<dbReference type="HAMAP" id="MF_00488">
    <property type="entry name" value="Lactate_dehydrog"/>
    <property type="match status" value="1"/>
</dbReference>
<dbReference type="InterPro" id="IPR001557">
    <property type="entry name" value="L-lactate/malate_DH"/>
</dbReference>
<dbReference type="InterPro" id="IPR011304">
    <property type="entry name" value="L-lactate_DH"/>
</dbReference>
<dbReference type="InterPro" id="IPR018177">
    <property type="entry name" value="L-lactate_DH_AS"/>
</dbReference>
<dbReference type="InterPro" id="IPR022383">
    <property type="entry name" value="Lactate/malate_DH_C"/>
</dbReference>
<dbReference type="InterPro" id="IPR001236">
    <property type="entry name" value="Lactate/malate_DH_N"/>
</dbReference>
<dbReference type="InterPro" id="IPR015955">
    <property type="entry name" value="Lactate_DH/Glyco_Ohase_4_C"/>
</dbReference>
<dbReference type="InterPro" id="IPR036291">
    <property type="entry name" value="NAD(P)-bd_dom_sf"/>
</dbReference>
<dbReference type="NCBIfam" id="TIGR01771">
    <property type="entry name" value="L-LDH-NAD"/>
    <property type="match status" value="1"/>
</dbReference>
<dbReference type="NCBIfam" id="NF000824">
    <property type="entry name" value="PRK00066.1"/>
    <property type="match status" value="1"/>
</dbReference>
<dbReference type="NCBIfam" id="NF004863">
    <property type="entry name" value="PRK06223.1"/>
    <property type="match status" value="1"/>
</dbReference>
<dbReference type="PANTHER" id="PTHR43128">
    <property type="entry name" value="L-2-HYDROXYCARBOXYLATE DEHYDROGENASE (NAD(P)(+))"/>
    <property type="match status" value="1"/>
</dbReference>
<dbReference type="PANTHER" id="PTHR43128:SF10">
    <property type="entry name" value="L-LACTATE DEHYDROGENASE A CHAIN"/>
    <property type="match status" value="1"/>
</dbReference>
<dbReference type="Pfam" id="PF02866">
    <property type="entry name" value="Ldh_1_C"/>
    <property type="match status" value="1"/>
</dbReference>
<dbReference type="Pfam" id="PF00056">
    <property type="entry name" value="Ldh_1_N"/>
    <property type="match status" value="1"/>
</dbReference>
<dbReference type="PIRSF" id="PIRSF000102">
    <property type="entry name" value="Lac_mal_DH"/>
    <property type="match status" value="1"/>
</dbReference>
<dbReference type="PRINTS" id="PR00086">
    <property type="entry name" value="LLDHDRGNASE"/>
</dbReference>
<dbReference type="SUPFAM" id="SSF56327">
    <property type="entry name" value="LDH C-terminal domain-like"/>
    <property type="match status" value="1"/>
</dbReference>
<dbReference type="SUPFAM" id="SSF51735">
    <property type="entry name" value="NAD(P)-binding Rossmann-fold domains"/>
    <property type="match status" value="1"/>
</dbReference>
<dbReference type="PROSITE" id="PS00064">
    <property type="entry name" value="L_LDH"/>
    <property type="match status" value="1"/>
</dbReference>
<keyword id="KW-0963">Cytoplasm</keyword>
<keyword id="KW-0520">NAD</keyword>
<keyword id="KW-0560">Oxidoreductase</keyword>
<accession>Q9W7M6</accession>
<proteinExistence type="evidence at transcript level"/>
<organism>
    <name type="scientific">Ambystoma mexicanum</name>
    <name type="common">Axolotl</name>
    <dbReference type="NCBI Taxonomy" id="8296"/>
    <lineage>
        <taxon>Eukaryota</taxon>
        <taxon>Metazoa</taxon>
        <taxon>Chordata</taxon>
        <taxon>Craniata</taxon>
        <taxon>Vertebrata</taxon>
        <taxon>Euteleostomi</taxon>
        <taxon>Amphibia</taxon>
        <taxon>Batrachia</taxon>
        <taxon>Caudata</taxon>
        <taxon>Salamandroidea</taxon>
        <taxon>Ambystomatidae</taxon>
        <taxon>Ambystoma</taxon>
    </lineage>
</organism>
<sequence>MSCMKEQLIINILKDEHAPAQNKITVVGVGAVGMACAMSILMKDLADELALVDVIEDKLKGEMMDLQHGSLFLRTPKIVSGKDYSVTANSKLVIVTAGARQQEGESRLNLVQRNVNIFKFIIPNVVKYSPDATLLVVSNPVDVLTYVAWKISGFPKHRVIGSGCNLDSARFRYLMGEKLGVHAQSCHGWVVGEHGDSSVPVWSGVNVAGVSLQTLNPELGTDADKENWKEVHKQVVESAYEVIKLKGYTSWAIGLSVADLAETIMKNLRRVHPVSTKVKGLYGVHEDVFLSVPCVLGNQGITDVVKMTLKPEEEDRLRKSSDTLWGIQKELHF</sequence>
<comment type="function">
    <text evidence="2">Interconverts simultaneously and stereospecifically pyruvate and lactate with concomitant interconversion of NADH and NAD(+).</text>
</comment>
<comment type="catalytic activity">
    <reaction evidence="2">
        <text>(S)-lactate + NAD(+) = pyruvate + NADH + H(+)</text>
        <dbReference type="Rhea" id="RHEA:23444"/>
        <dbReference type="ChEBI" id="CHEBI:15361"/>
        <dbReference type="ChEBI" id="CHEBI:15378"/>
        <dbReference type="ChEBI" id="CHEBI:16651"/>
        <dbReference type="ChEBI" id="CHEBI:57540"/>
        <dbReference type="ChEBI" id="CHEBI:57945"/>
        <dbReference type="EC" id="1.1.1.27"/>
    </reaction>
    <physiologicalReaction direction="left-to-right" evidence="2">
        <dbReference type="Rhea" id="RHEA:23445"/>
    </physiologicalReaction>
    <physiologicalReaction direction="right-to-left" evidence="2">
        <dbReference type="Rhea" id="RHEA:23446"/>
    </physiologicalReaction>
</comment>
<comment type="pathway">
    <text evidence="2">Fermentation; pyruvate fermentation to lactate; (S)-lactate from pyruvate: step 1/1.</text>
</comment>
<comment type="subunit">
    <text evidence="1">Homotetramer.</text>
</comment>
<comment type="subcellular location">
    <subcellularLocation>
        <location evidence="1">Cytoplasm</location>
    </subcellularLocation>
</comment>
<comment type="similarity">
    <text evidence="3">Belongs to the LDH/MDH superfamily. LDH family.</text>
</comment>
<evidence type="ECO:0000250" key="1"/>
<evidence type="ECO:0000250" key="2">
    <source>
        <dbReference type="UniProtKB" id="P00338"/>
    </source>
</evidence>
<evidence type="ECO:0000305" key="3"/>
<protein>
    <recommendedName>
        <fullName>L-lactate dehydrogenase A chain</fullName>
        <shortName>LDH-A</shortName>
        <ecNumber evidence="2">1.1.1.27</ecNumber>
    </recommendedName>
</protein>